<name>S2551_MOUSE</name>
<proteinExistence type="evidence at protein level"/>
<dbReference type="EMBL" id="AK146788">
    <property type="protein sequence ID" value="BAE27432.1"/>
    <property type="status" value="ALT_INIT"/>
    <property type="molecule type" value="mRNA"/>
</dbReference>
<dbReference type="EMBL" id="AK150362">
    <property type="protein sequence ID" value="BAE29497.1"/>
    <property type="status" value="ALT_INIT"/>
    <property type="molecule type" value="mRNA"/>
</dbReference>
<dbReference type="EMBL" id="AK151688">
    <property type="protein sequence ID" value="BAE30612.1"/>
    <property type="status" value="ALT_INIT"/>
    <property type="molecule type" value="mRNA"/>
</dbReference>
<dbReference type="EMBL" id="AK152171">
    <property type="protein sequence ID" value="BAE31003.1"/>
    <property type="status" value="ALT_INIT"/>
    <property type="molecule type" value="mRNA"/>
</dbReference>
<dbReference type="EMBL" id="AK156168">
    <property type="protein sequence ID" value="BAE33610.1"/>
    <property type="status" value="ALT_INIT"/>
    <property type="molecule type" value="mRNA"/>
</dbReference>
<dbReference type="EMBL" id="AK165253">
    <property type="protein sequence ID" value="BAE38106.1"/>
    <property type="status" value="ALT_INIT"/>
    <property type="molecule type" value="mRNA"/>
</dbReference>
<dbReference type="EMBL" id="BC089000">
    <property type="protein sequence ID" value="AAH89000.1"/>
    <property type="molecule type" value="mRNA"/>
</dbReference>
<dbReference type="CCDS" id="CCDS18137.1"/>
<dbReference type="RefSeq" id="NP_001009949.3">
    <property type="nucleotide sequence ID" value="NM_001009949.3"/>
</dbReference>
<dbReference type="RefSeq" id="XP_006537898.1">
    <property type="nucleotide sequence ID" value="XM_006537835.5"/>
</dbReference>
<dbReference type="RefSeq" id="XP_017175615.1">
    <property type="nucleotide sequence ID" value="XM_017320126.1"/>
</dbReference>
<dbReference type="SMR" id="Q5HZI9"/>
<dbReference type="BioGRID" id="230936">
    <property type="interactions" value="3"/>
</dbReference>
<dbReference type="FunCoup" id="Q5HZI9">
    <property type="interactions" value="1105"/>
</dbReference>
<dbReference type="IntAct" id="Q5HZI9">
    <property type="interactions" value="1"/>
</dbReference>
<dbReference type="MINT" id="Q5HZI9"/>
<dbReference type="STRING" id="10090.ENSMUSP00000112044"/>
<dbReference type="GlyGen" id="Q5HZI9">
    <property type="glycosylation" value="1 site, 1 O-linked glycan (1 site)"/>
</dbReference>
<dbReference type="iPTMnet" id="Q5HZI9"/>
<dbReference type="PhosphoSitePlus" id="Q5HZI9"/>
<dbReference type="SwissPalm" id="Q5HZI9"/>
<dbReference type="jPOST" id="Q5HZI9"/>
<dbReference type="PaxDb" id="10090-ENSMUSP00000103425"/>
<dbReference type="PeptideAtlas" id="Q5HZI9"/>
<dbReference type="ProteomicsDB" id="256671"/>
<dbReference type="Pumba" id="Q5HZI9"/>
<dbReference type="DNASU" id="230125"/>
<dbReference type="Ensembl" id="ENSMUST00000116341.4">
    <property type="protein sequence ID" value="ENSMUSP00000112044.4"/>
    <property type="gene ID" value="ENSMUSG00000045973.19"/>
</dbReference>
<dbReference type="Ensembl" id="ENSMUST00000132815.3">
    <property type="protein sequence ID" value="ENSMUSP00000134132.2"/>
    <property type="gene ID" value="ENSMUSG00000045973.19"/>
</dbReference>
<dbReference type="GeneID" id="230125"/>
<dbReference type="KEGG" id="mmu:230125"/>
<dbReference type="UCSC" id="uc008ssr.2">
    <property type="organism name" value="mouse"/>
</dbReference>
<dbReference type="AGR" id="MGI:2684984"/>
<dbReference type="CTD" id="92014"/>
<dbReference type="MGI" id="MGI:2684984">
    <property type="gene designation" value="Slc25a51"/>
</dbReference>
<dbReference type="VEuPathDB" id="HostDB:ENSMUSG00000045973"/>
<dbReference type="eggNOG" id="KOG1519">
    <property type="taxonomic scope" value="Eukaryota"/>
</dbReference>
<dbReference type="GeneTree" id="ENSGT00940000155622"/>
<dbReference type="HOGENOM" id="CLU_061821_0_0_1"/>
<dbReference type="InParanoid" id="Q5HZI9"/>
<dbReference type="OMA" id="GCAFNTG"/>
<dbReference type="OrthoDB" id="9629at9989"/>
<dbReference type="BioGRID-ORCS" id="230125">
    <property type="hits" value="20 hits in 78 CRISPR screens"/>
</dbReference>
<dbReference type="ChiTaRS" id="Slc25a51">
    <property type="organism name" value="mouse"/>
</dbReference>
<dbReference type="PRO" id="PR:Q5HZI9"/>
<dbReference type="Proteomes" id="UP000000589">
    <property type="component" value="Chromosome 4"/>
</dbReference>
<dbReference type="RNAct" id="Q5HZI9">
    <property type="molecule type" value="protein"/>
</dbReference>
<dbReference type="Bgee" id="ENSMUSG00000045973">
    <property type="expression patterns" value="Expressed in fetal liver hematopoietic progenitor cell and 261 other cell types or tissues"/>
</dbReference>
<dbReference type="ExpressionAtlas" id="Q5HZI9">
    <property type="expression patterns" value="baseline and differential"/>
</dbReference>
<dbReference type="GO" id="GO:0005743">
    <property type="term" value="C:mitochondrial inner membrane"/>
    <property type="evidence" value="ECO:0000315"/>
    <property type="project" value="MGI"/>
</dbReference>
<dbReference type="GO" id="GO:0005739">
    <property type="term" value="C:mitochondrion"/>
    <property type="evidence" value="ECO:0007005"/>
    <property type="project" value="MGI"/>
</dbReference>
<dbReference type="GO" id="GO:0051724">
    <property type="term" value="F:NAD transmembrane transporter activity"/>
    <property type="evidence" value="ECO:0000315"/>
    <property type="project" value="MGI"/>
</dbReference>
<dbReference type="GO" id="GO:0008514">
    <property type="term" value="F:organic anion transmembrane transporter activity"/>
    <property type="evidence" value="ECO:0000315"/>
    <property type="project" value="MGI"/>
</dbReference>
<dbReference type="GO" id="GO:0019646">
    <property type="term" value="P:aerobic electron transport chain"/>
    <property type="evidence" value="ECO:0000250"/>
    <property type="project" value="UniProtKB"/>
</dbReference>
<dbReference type="GO" id="GO:1990549">
    <property type="term" value="P:mitochondrial NAD transmembrane transport"/>
    <property type="evidence" value="ECO:0000250"/>
    <property type="project" value="UniProtKB"/>
</dbReference>
<dbReference type="GO" id="GO:0006741">
    <property type="term" value="P:NADP biosynthetic process"/>
    <property type="evidence" value="ECO:0000315"/>
    <property type="project" value="MGI"/>
</dbReference>
<dbReference type="FunFam" id="1.50.40.10:FF:000251">
    <property type="entry name" value="Solute carrier family 25 member 51"/>
    <property type="match status" value="1"/>
</dbReference>
<dbReference type="Gene3D" id="1.50.40.10">
    <property type="entry name" value="Mitochondrial carrier domain"/>
    <property type="match status" value="1"/>
</dbReference>
<dbReference type="InterPro" id="IPR052465">
    <property type="entry name" value="Mito_NAD+_Carrier"/>
</dbReference>
<dbReference type="InterPro" id="IPR018108">
    <property type="entry name" value="Mitochondrial_sb/sol_carrier"/>
</dbReference>
<dbReference type="InterPro" id="IPR023395">
    <property type="entry name" value="Mt_carrier_dom_sf"/>
</dbReference>
<dbReference type="PANTHER" id="PTHR46131:SF2">
    <property type="entry name" value="MITOCHONDRIAL NICOTINAMIDE ADENINE DINUCLEOTIDE TRANSPORTER SLC25A51-RELATED"/>
    <property type="match status" value="1"/>
</dbReference>
<dbReference type="PANTHER" id="PTHR46131">
    <property type="entry name" value="SD08549P"/>
    <property type="match status" value="1"/>
</dbReference>
<dbReference type="Pfam" id="PF00153">
    <property type="entry name" value="Mito_carr"/>
    <property type="match status" value="3"/>
</dbReference>
<dbReference type="SUPFAM" id="SSF103506">
    <property type="entry name" value="Mitochondrial carrier"/>
    <property type="match status" value="1"/>
</dbReference>
<dbReference type="PROSITE" id="PS50920">
    <property type="entry name" value="SOLCAR"/>
    <property type="match status" value="3"/>
</dbReference>
<organism>
    <name type="scientific">Mus musculus</name>
    <name type="common">Mouse</name>
    <dbReference type="NCBI Taxonomy" id="10090"/>
    <lineage>
        <taxon>Eukaryota</taxon>
        <taxon>Metazoa</taxon>
        <taxon>Chordata</taxon>
        <taxon>Craniata</taxon>
        <taxon>Vertebrata</taxon>
        <taxon>Euteleostomi</taxon>
        <taxon>Mammalia</taxon>
        <taxon>Eutheria</taxon>
        <taxon>Euarchontoglires</taxon>
        <taxon>Glires</taxon>
        <taxon>Rodentia</taxon>
        <taxon>Myomorpha</taxon>
        <taxon>Muroidea</taxon>
        <taxon>Muridae</taxon>
        <taxon>Murinae</taxon>
        <taxon>Mus</taxon>
        <taxon>Mus</taxon>
    </lineage>
</organism>
<evidence type="ECO:0000250" key="1">
    <source>
        <dbReference type="UniProtKB" id="Q9H1U9"/>
    </source>
</evidence>
<evidence type="ECO:0000255" key="2"/>
<evidence type="ECO:0000256" key="3">
    <source>
        <dbReference type="SAM" id="MobiDB-lite"/>
    </source>
</evidence>
<evidence type="ECO:0000305" key="4"/>
<evidence type="ECO:0000312" key="5">
    <source>
        <dbReference type="MGI" id="MGI:2684984"/>
    </source>
</evidence>
<accession>Q5HZI9</accession>
<accession>Q3U190</accession>
<accession>Q3UCW5</accession>
<keyword id="KW-0472">Membrane</keyword>
<keyword id="KW-0496">Mitochondrion</keyword>
<keyword id="KW-0999">Mitochondrion inner membrane</keyword>
<keyword id="KW-1185">Reference proteome</keyword>
<keyword id="KW-0677">Repeat</keyword>
<keyword id="KW-0812">Transmembrane</keyword>
<keyword id="KW-1133">Transmembrane helix</keyword>
<keyword id="KW-0813">Transport</keyword>
<comment type="function">
    <text evidence="1">Mitochondrial membrane carrier protein that mediates the import of NAD(+) into mitochondria. Mitochondrial NAD(+) is required for glycolysis and mitochondrial respiration. Compared to SLC25A52, SLC25A51-mediated transport is essential for the import of NAD(+) in mitochondria. The transport mechanism, uniport or antiport, its electrogenicity and substrate selectivity, remain to be elucidated.</text>
</comment>
<comment type="catalytic activity">
    <reaction evidence="1">
        <text>NAD(+)(in) = NAD(+)(out)</text>
        <dbReference type="Rhea" id="RHEA:65408"/>
        <dbReference type="ChEBI" id="CHEBI:57540"/>
    </reaction>
</comment>
<comment type="subcellular location">
    <subcellularLocation>
        <location evidence="1">Mitochondrion inner membrane</location>
        <topology evidence="2">Multi-pass membrane protein</topology>
    </subcellularLocation>
</comment>
<comment type="similarity">
    <text evidence="4">Belongs to the mitochondrial carrier (TC 2.A.29) family.</text>
</comment>
<comment type="sequence caution" evidence="4">
    <conflict type="erroneous initiation">
        <sequence resource="EMBL-CDS" id="BAE27432"/>
    </conflict>
    <text>Extended N-terminus.</text>
</comment>
<comment type="sequence caution" evidence="4">
    <conflict type="erroneous initiation">
        <sequence resource="EMBL-CDS" id="BAE29497"/>
    </conflict>
    <text>Extended N-terminus.</text>
</comment>
<comment type="sequence caution" evidence="4">
    <conflict type="erroneous initiation">
        <sequence resource="EMBL-CDS" id="BAE30612"/>
    </conflict>
    <text>Extended N-terminus.</text>
</comment>
<comment type="sequence caution" evidence="4">
    <conflict type="erroneous initiation">
        <sequence resource="EMBL-CDS" id="BAE31003"/>
    </conflict>
    <text>Extended N-terminus.</text>
</comment>
<comment type="sequence caution" evidence="4">
    <conflict type="erroneous initiation">
        <sequence resource="EMBL-CDS" id="BAE33610"/>
    </conflict>
    <text>Extended N-terminus.</text>
</comment>
<comment type="sequence caution" evidence="4">
    <conflict type="erroneous initiation">
        <sequence resource="EMBL-CDS" id="BAE38106"/>
    </conflict>
    <text>Extended N-terminus.</text>
</comment>
<feature type="chain" id="PRO_0000090712" description="Mitochondrial nicotinamide adenine dinucleotide transporter SLC25A51">
    <location>
        <begin position="1"/>
        <end position="298"/>
    </location>
</feature>
<feature type="transmembrane region" description="Helical; Name=1" evidence="2">
    <location>
        <begin position="36"/>
        <end position="56"/>
    </location>
</feature>
<feature type="transmembrane region" description="Helical; Name=2" evidence="2">
    <location>
        <begin position="85"/>
        <end position="105"/>
    </location>
</feature>
<feature type="transmembrane region" description="Helical; Name=3" evidence="2">
    <location>
        <begin position="119"/>
        <end position="139"/>
    </location>
</feature>
<feature type="transmembrane region" description="Helical; Name=4" evidence="2">
    <location>
        <begin position="180"/>
        <end position="200"/>
    </location>
</feature>
<feature type="transmembrane region" description="Helical; Name=5" evidence="2">
    <location>
        <begin position="216"/>
        <end position="236"/>
    </location>
</feature>
<feature type="transmembrane region" description="Helical; Name=6" evidence="2">
    <location>
        <begin position="269"/>
        <end position="290"/>
    </location>
</feature>
<feature type="repeat" description="Solcar 1" evidence="2">
    <location>
        <begin position="28"/>
        <end position="108"/>
    </location>
</feature>
<feature type="repeat" description="Solcar 2" evidence="2">
    <location>
        <begin position="117"/>
        <end position="201"/>
    </location>
</feature>
<feature type="repeat" description="Solcar 3" evidence="2">
    <location>
        <begin position="214"/>
        <end position="297"/>
    </location>
</feature>
<feature type="region of interest" description="Disordered" evidence="3">
    <location>
        <begin position="1"/>
        <end position="21"/>
    </location>
</feature>
<feature type="compositionally biased region" description="Basic and acidic residues" evidence="3">
    <location>
        <begin position="1"/>
        <end position="11"/>
    </location>
</feature>
<feature type="sequence conflict" description="In Ref. 1; BAE33610." evidence="4" ref="1">
    <original>LLKIV</original>
    <variation>FVKDCMMKSLCEMLFSSN</variation>
    <location>
        <begin position="294"/>
        <end position="298"/>
    </location>
</feature>
<sequence>MMDSEAHEKRPPMLTSSNQDLSPHIAGVGDMKHYLCGYCAAFNNVAITYPVQKILFRQQLYGIKTRDAVLQLRKDGFRNLYRGILPPLMQKTTTLALMFGLYEDLSRLLHKHVSSAPEFATRSVAALLAGTTEAILTPFERVQTLLQDHKHHDKFTNTYQAFRALRCHGIAEYYRGMVPILFRNGFGNVLFFGLRGPIKESLPTATTYSAHLVNDFICGGVLGAVLGFLSFPINVVKARIQSQIGGPFLSLPMVFKTIWIERDRKLINLFRGAHLNYHRSLISWGIINATYEFLLKIV</sequence>
<gene>
    <name evidence="5" type="primary">Slc25a51</name>
    <name evidence="5" type="synonym">Mcart1</name>
</gene>
<protein>
    <recommendedName>
        <fullName evidence="4">Mitochondrial nicotinamide adenine dinucleotide transporter SLC25A51</fullName>
    </recommendedName>
    <alternativeName>
        <fullName evidence="4">Mitochondrial NAD(+) transporter SLC25A51</fullName>
    </alternativeName>
    <alternativeName>
        <fullName evidence="4">Mitochondrial carrier triple repeat protein 1</fullName>
    </alternativeName>
    <alternativeName>
        <fullName evidence="4">Solute carrier family 25 member 51</fullName>
    </alternativeName>
</protein>
<reference key="1">
    <citation type="journal article" date="2005" name="Science">
        <title>The transcriptional landscape of the mammalian genome.</title>
        <authorList>
            <person name="Carninci P."/>
            <person name="Kasukawa T."/>
            <person name="Katayama S."/>
            <person name="Gough J."/>
            <person name="Frith M.C."/>
            <person name="Maeda N."/>
            <person name="Oyama R."/>
            <person name="Ravasi T."/>
            <person name="Lenhard B."/>
            <person name="Wells C."/>
            <person name="Kodzius R."/>
            <person name="Shimokawa K."/>
            <person name="Bajic V.B."/>
            <person name="Brenner S.E."/>
            <person name="Batalov S."/>
            <person name="Forrest A.R."/>
            <person name="Zavolan M."/>
            <person name="Davis M.J."/>
            <person name="Wilming L.G."/>
            <person name="Aidinis V."/>
            <person name="Allen J.E."/>
            <person name="Ambesi-Impiombato A."/>
            <person name="Apweiler R."/>
            <person name="Aturaliya R.N."/>
            <person name="Bailey T.L."/>
            <person name="Bansal M."/>
            <person name="Baxter L."/>
            <person name="Beisel K.W."/>
            <person name="Bersano T."/>
            <person name="Bono H."/>
            <person name="Chalk A.M."/>
            <person name="Chiu K.P."/>
            <person name="Choudhary V."/>
            <person name="Christoffels A."/>
            <person name="Clutterbuck D.R."/>
            <person name="Crowe M.L."/>
            <person name="Dalla E."/>
            <person name="Dalrymple B.P."/>
            <person name="de Bono B."/>
            <person name="Della Gatta G."/>
            <person name="di Bernardo D."/>
            <person name="Down T."/>
            <person name="Engstrom P."/>
            <person name="Fagiolini M."/>
            <person name="Faulkner G."/>
            <person name="Fletcher C.F."/>
            <person name="Fukushima T."/>
            <person name="Furuno M."/>
            <person name="Futaki S."/>
            <person name="Gariboldi M."/>
            <person name="Georgii-Hemming P."/>
            <person name="Gingeras T.R."/>
            <person name="Gojobori T."/>
            <person name="Green R.E."/>
            <person name="Gustincich S."/>
            <person name="Harbers M."/>
            <person name="Hayashi Y."/>
            <person name="Hensch T.K."/>
            <person name="Hirokawa N."/>
            <person name="Hill D."/>
            <person name="Huminiecki L."/>
            <person name="Iacono M."/>
            <person name="Ikeo K."/>
            <person name="Iwama A."/>
            <person name="Ishikawa T."/>
            <person name="Jakt M."/>
            <person name="Kanapin A."/>
            <person name="Katoh M."/>
            <person name="Kawasawa Y."/>
            <person name="Kelso J."/>
            <person name="Kitamura H."/>
            <person name="Kitano H."/>
            <person name="Kollias G."/>
            <person name="Krishnan S.P."/>
            <person name="Kruger A."/>
            <person name="Kummerfeld S.K."/>
            <person name="Kurochkin I.V."/>
            <person name="Lareau L.F."/>
            <person name="Lazarevic D."/>
            <person name="Lipovich L."/>
            <person name="Liu J."/>
            <person name="Liuni S."/>
            <person name="McWilliam S."/>
            <person name="Madan Babu M."/>
            <person name="Madera M."/>
            <person name="Marchionni L."/>
            <person name="Matsuda H."/>
            <person name="Matsuzawa S."/>
            <person name="Miki H."/>
            <person name="Mignone F."/>
            <person name="Miyake S."/>
            <person name="Morris K."/>
            <person name="Mottagui-Tabar S."/>
            <person name="Mulder N."/>
            <person name="Nakano N."/>
            <person name="Nakauchi H."/>
            <person name="Ng P."/>
            <person name="Nilsson R."/>
            <person name="Nishiguchi S."/>
            <person name="Nishikawa S."/>
            <person name="Nori F."/>
            <person name="Ohara O."/>
            <person name="Okazaki Y."/>
            <person name="Orlando V."/>
            <person name="Pang K.C."/>
            <person name="Pavan W.J."/>
            <person name="Pavesi G."/>
            <person name="Pesole G."/>
            <person name="Petrovsky N."/>
            <person name="Piazza S."/>
            <person name="Reed J."/>
            <person name="Reid J.F."/>
            <person name="Ring B.Z."/>
            <person name="Ringwald M."/>
            <person name="Rost B."/>
            <person name="Ruan Y."/>
            <person name="Salzberg S.L."/>
            <person name="Sandelin A."/>
            <person name="Schneider C."/>
            <person name="Schoenbach C."/>
            <person name="Sekiguchi K."/>
            <person name="Semple C.A."/>
            <person name="Seno S."/>
            <person name="Sessa L."/>
            <person name="Sheng Y."/>
            <person name="Shibata Y."/>
            <person name="Shimada H."/>
            <person name="Shimada K."/>
            <person name="Silva D."/>
            <person name="Sinclair B."/>
            <person name="Sperling S."/>
            <person name="Stupka E."/>
            <person name="Sugiura K."/>
            <person name="Sultana R."/>
            <person name="Takenaka Y."/>
            <person name="Taki K."/>
            <person name="Tammoja K."/>
            <person name="Tan S.L."/>
            <person name="Tang S."/>
            <person name="Taylor M.S."/>
            <person name="Tegner J."/>
            <person name="Teichmann S.A."/>
            <person name="Ueda H.R."/>
            <person name="van Nimwegen E."/>
            <person name="Verardo R."/>
            <person name="Wei C.L."/>
            <person name="Yagi K."/>
            <person name="Yamanishi H."/>
            <person name="Zabarovsky E."/>
            <person name="Zhu S."/>
            <person name="Zimmer A."/>
            <person name="Hide W."/>
            <person name="Bult C."/>
            <person name="Grimmond S.M."/>
            <person name="Teasdale R.D."/>
            <person name="Liu E.T."/>
            <person name="Brusic V."/>
            <person name="Quackenbush J."/>
            <person name="Wahlestedt C."/>
            <person name="Mattick J.S."/>
            <person name="Hume D.A."/>
            <person name="Kai C."/>
            <person name="Sasaki D."/>
            <person name="Tomaru Y."/>
            <person name="Fukuda S."/>
            <person name="Kanamori-Katayama M."/>
            <person name="Suzuki M."/>
            <person name="Aoki J."/>
            <person name="Arakawa T."/>
            <person name="Iida J."/>
            <person name="Imamura K."/>
            <person name="Itoh M."/>
            <person name="Kato T."/>
            <person name="Kawaji H."/>
            <person name="Kawagashira N."/>
            <person name="Kawashima T."/>
            <person name="Kojima M."/>
            <person name="Kondo S."/>
            <person name="Konno H."/>
            <person name="Nakano K."/>
            <person name="Ninomiya N."/>
            <person name="Nishio T."/>
            <person name="Okada M."/>
            <person name="Plessy C."/>
            <person name="Shibata K."/>
            <person name="Shiraki T."/>
            <person name="Suzuki S."/>
            <person name="Tagami M."/>
            <person name="Waki K."/>
            <person name="Watahiki A."/>
            <person name="Okamura-Oho Y."/>
            <person name="Suzuki H."/>
            <person name="Kawai J."/>
            <person name="Hayashizaki Y."/>
        </authorList>
    </citation>
    <scope>NUCLEOTIDE SEQUENCE [LARGE SCALE MRNA]</scope>
    <source>
        <strain>C57BL/6J</strain>
        <strain>NOD</strain>
        <tissue>Bone marrow</tissue>
        <tissue>Kidney</tissue>
        <tissue>Spleen</tissue>
    </source>
</reference>
<reference key="2">
    <citation type="journal article" date="2004" name="Genome Res.">
        <title>The status, quality, and expansion of the NIH full-length cDNA project: the Mammalian Gene Collection (MGC).</title>
        <authorList>
            <consortium name="The MGC Project Team"/>
        </authorList>
    </citation>
    <scope>NUCLEOTIDE SEQUENCE [LARGE SCALE MRNA]</scope>
    <source>
        <strain>C57BL/6J</strain>
        <tissue>Brain</tissue>
    </source>
</reference>
<reference key="3">
    <citation type="journal article" date="2010" name="Cell">
        <title>A tissue-specific atlas of mouse protein phosphorylation and expression.</title>
        <authorList>
            <person name="Huttlin E.L."/>
            <person name="Jedrychowski M.P."/>
            <person name="Elias J.E."/>
            <person name="Goswami T."/>
            <person name="Rad R."/>
            <person name="Beausoleil S.A."/>
            <person name="Villen J."/>
            <person name="Haas W."/>
            <person name="Sowa M.E."/>
            <person name="Gygi S.P."/>
        </authorList>
    </citation>
    <scope>IDENTIFICATION BY MASS SPECTROMETRY [LARGE SCALE ANALYSIS]</scope>
    <source>
        <tissue>Brain</tissue>
        <tissue>Brown adipose tissue</tissue>
        <tissue>Kidney</tissue>
        <tissue>Spleen</tissue>
    </source>
</reference>